<comment type="function">
    <text evidence="1">Catalyzes the condensation of the acetyl group of acetyl-CoA with 3-methyl-2-oxobutanoate (2-ketoisovalerate) to form 3-carboxy-3-hydroxy-4-methylpentanoate (2-isopropylmalate).</text>
</comment>
<comment type="catalytic activity">
    <reaction evidence="1">
        <text>3-methyl-2-oxobutanoate + acetyl-CoA + H2O = (2S)-2-isopropylmalate + CoA + H(+)</text>
        <dbReference type="Rhea" id="RHEA:21524"/>
        <dbReference type="ChEBI" id="CHEBI:1178"/>
        <dbReference type="ChEBI" id="CHEBI:11851"/>
        <dbReference type="ChEBI" id="CHEBI:15377"/>
        <dbReference type="ChEBI" id="CHEBI:15378"/>
        <dbReference type="ChEBI" id="CHEBI:57287"/>
        <dbReference type="ChEBI" id="CHEBI:57288"/>
        <dbReference type="EC" id="2.3.3.13"/>
    </reaction>
</comment>
<comment type="cofactor">
    <cofactor evidence="1">
        <name>Mn(2+)</name>
        <dbReference type="ChEBI" id="CHEBI:29035"/>
    </cofactor>
</comment>
<comment type="pathway">
    <text evidence="1">Amino-acid biosynthesis; L-leucine biosynthesis; L-leucine from 3-methyl-2-oxobutanoate: step 1/4.</text>
</comment>
<comment type="subunit">
    <text evidence="1">Homodimer.</text>
</comment>
<comment type="subcellular location">
    <subcellularLocation>
        <location evidence="1">Cytoplasm</location>
    </subcellularLocation>
</comment>
<comment type="similarity">
    <text evidence="1">Belongs to the alpha-IPM synthase/homocitrate synthase family. LeuA type 1 subfamily.</text>
</comment>
<protein>
    <recommendedName>
        <fullName evidence="1">2-isopropylmalate synthase</fullName>
        <ecNumber evidence="1">2.3.3.13</ecNumber>
    </recommendedName>
    <alternativeName>
        <fullName evidence="1">Alpha-IPM synthase</fullName>
    </alternativeName>
    <alternativeName>
        <fullName evidence="1">Alpha-isopropylmalate synthase</fullName>
    </alternativeName>
</protein>
<reference key="1">
    <citation type="journal article" date="2008" name="J. Bacteriol.">
        <title>Insights into the environmental resistance gene pool from the genome sequence of the multidrug-resistant environmental isolate Escherichia coli SMS-3-5.</title>
        <authorList>
            <person name="Fricke W.F."/>
            <person name="Wright M.S."/>
            <person name="Lindell A.H."/>
            <person name="Harkins D.M."/>
            <person name="Baker-Austin C."/>
            <person name="Ravel J."/>
            <person name="Stepanauskas R."/>
        </authorList>
    </citation>
    <scope>NUCLEOTIDE SEQUENCE [LARGE SCALE GENOMIC DNA]</scope>
    <source>
        <strain>SMS-3-5 / SECEC</strain>
    </source>
</reference>
<proteinExistence type="inferred from homology"/>
<evidence type="ECO:0000255" key="1">
    <source>
        <dbReference type="HAMAP-Rule" id="MF_01025"/>
    </source>
</evidence>
<sequence length="523" mass="57256">MSQQVIIFDTTLRDGEQALQASLSAKEKLQIALALERMGVDVMEVGFPVSSPGDFESVQTIARQVKNSRVCALARCVEKDIDVAAESLKVAEAFRIHTFIATSPMHIATKLRSTLDEVIERAIYMVKRARNYTDDVEFSCEDAGRTPIADLARVVEAAINAGATTINIPDTVGYTMPFEFAGIISGLYERVPNIDKAIISVHTHDDLGLAVGNSLAAVHAGARQVEGAMNGIGERAGNCSLEEVIMAIKVRKDILNVHTAINHQEIWRTSQLVSQICNMPIPANKAIVGSGAFAHSSGIHQDGVLKNRENYEIMTPESIGLNQIQLNLTSRSGRAAVKHRMDEMGYKESEYNLDNLYDAFLKLADKKGQVFDYDLEALAFIGKQQEEPEHFRLDYFSVQSGSNDIATAAVKLACGEEVKAEAANGNGPVDAVYQAINRITDYNVELVKYSLTAKGHGKDALGQVDIVANYNGRRFHGVGLATDIVESSAKAMVHVLNNIWRAAEVEKELQRKAQHNENNKETV</sequence>
<keyword id="KW-0028">Amino-acid biosynthesis</keyword>
<keyword id="KW-0100">Branched-chain amino acid biosynthesis</keyword>
<keyword id="KW-0963">Cytoplasm</keyword>
<keyword id="KW-0432">Leucine biosynthesis</keyword>
<keyword id="KW-0464">Manganese</keyword>
<keyword id="KW-0479">Metal-binding</keyword>
<keyword id="KW-0808">Transferase</keyword>
<gene>
    <name evidence="1" type="primary">leuA</name>
    <name type="ordered locus">EcSMS35_0079</name>
</gene>
<accession>B1LG11</accession>
<name>LEU1_ECOSM</name>
<organism>
    <name type="scientific">Escherichia coli (strain SMS-3-5 / SECEC)</name>
    <dbReference type="NCBI Taxonomy" id="439855"/>
    <lineage>
        <taxon>Bacteria</taxon>
        <taxon>Pseudomonadati</taxon>
        <taxon>Pseudomonadota</taxon>
        <taxon>Gammaproteobacteria</taxon>
        <taxon>Enterobacterales</taxon>
        <taxon>Enterobacteriaceae</taxon>
        <taxon>Escherichia</taxon>
    </lineage>
</organism>
<dbReference type="EC" id="2.3.3.13" evidence="1"/>
<dbReference type="EMBL" id="CP000970">
    <property type="protein sequence ID" value="ACB19468.1"/>
    <property type="molecule type" value="Genomic_DNA"/>
</dbReference>
<dbReference type="RefSeq" id="WP_000082807.1">
    <property type="nucleotide sequence ID" value="NC_010498.1"/>
</dbReference>
<dbReference type="SMR" id="B1LG11"/>
<dbReference type="GeneID" id="75058817"/>
<dbReference type="KEGG" id="ecm:EcSMS35_0079"/>
<dbReference type="HOGENOM" id="CLU_022158_0_1_6"/>
<dbReference type="UniPathway" id="UPA00048">
    <property type="reaction ID" value="UER00070"/>
</dbReference>
<dbReference type="Proteomes" id="UP000007011">
    <property type="component" value="Chromosome"/>
</dbReference>
<dbReference type="GO" id="GO:0005829">
    <property type="term" value="C:cytosol"/>
    <property type="evidence" value="ECO:0007669"/>
    <property type="project" value="TreeGrafter"/>
</dbReference>
<dbReference type="GO" id="GO:0003852">
    <property type="term" value="F:2-isopropylmalate synthase activity"/>
    <property type="evidence" value="ECO:0007669"/>
    <property type="project" value="UniProtKB-UniRule"/>
</dbReference>
<dbReference type="GO" id="GO:0003985">
    <property type="term" value="F:acetyl-CoA C-acetyltransferase activity"/>
    <property type="evidence" value="ECO:0007669"/>
    <property type="project" value="UniProtKB-UniRule"/>
</dbReference>
<dbReference type="GO" id="GO:0030145">
    <property type="term" value="F:manganese ion binding"/>
    <property type="evidence" value="ECO:0007669"/>
    <property type="project" value="UniProtKB-UniRule"/>
</dbReference>
<dbReference type="GO" id="GO:0009098">
    <property type="term" value="P:L-leucine biosynthetic process"/>
    <property type="evidence" value="ECO:0007669"/>
    <property type="project" value="UniProtKB-UniRule"/>
</dbReference>
<dbReference type="CDD" id="cd07940">
    <property type="entry name" value="DRE_TIM_IPMS"/>
    <property type="match status" value="1"/>
</dbReference>
<dbReference type="FunFam" id="1.10.238.260:FF:000001">
    <property type="entry name" value="2-isopropylmalate synthase"/>
    <property type="match status" value="1"/>
</dbReference>
<dbReference type="FunFam" id="3.20.20.70:FF:000010">
    <property type="entry name" value="2-isopropylmalate synthase"/>
    <property type="match status" value="1"/>
</dbReference>
<dbReference type="FunFam" id="3.30.160.270:FF:000001">
    <property type="entry name" value="2-isopropylmalate synthase"/>
    <property type="match status" value="1"/>
</dbReference>
<dbReference type="Gene3D" id="1.10.238.260">
    <property type="match status" value="1"/>
</dbReference>
<dbReference type="Gene3D" id="3.30.160.270">
    <property type="match status" value="1"/>
</dbReference>
<dbReference type="Gene3D" id="3.20.20.70">
    <property type="entry name" value="Aldolase class I"/>
    <property type="match status" value="1"/>
</dbReference>
<dbReference type="HAMAP" id="MF_01025">
    <property type="entry name" value="LeuA_type1"/>
    <property type="match status" value="1"/>
</dbReference>
<dbReference type="InterPro" id="IPR050073">
    <property type="entry name" value="2-IPM_HCS-like"/>
</dbReference>
<dbReference type="InterPro" id="IPR013709">
    <property type="entry name" value="2-isopropylmalate_synth_dimer"/>
</dbReference>
<dbReference type="InterPro" id="IPR002034">
    <property type="entry name" value="AIPM/Hcit_synth_CS"/>
</dbReference>
<dbReference type="InterPro" id="IPR013785">
    <property type="entry name" value="Aldolase_TIM"/>
</dbReference>
<dbReference type="InterPro" id="IPR054691">
    <property type="entry name" value="LeuA/HCS_post-cat"/>
</dbReference>
<dbReference type="InterPro" id="IPR036230">
    <property type="entry name" value="LeuA_allosteric_dom_sf"/>
</dbReference>
<dbReference type="InterPro" id="IPR005671">
    <property type="entry name" value="LeuA_bact_synth"/>
</dbReference>
<dbReference type="InterPro" id="IPR000891">
    <property type="entry name" value="PYR_CT"/>
</dbReference>
<dbReference type="NCBIfam" id="TIGR00973">
    <property type="entry name" value="leuA_bact"/>
    <property type="match status" value="1"/>
</dbReference>
<dbReference type="NCBIfam" id="NF002084">
    <property type="entry name" value="PRK00915.1-1"/>
    <property type="match status" value="1"/>
</dbReference>
<dbReference type="NCBIfam" id="NF002086">
    <property type="entry name" value="PRK00915.1-3"/>
    <property type="match status" value="1"/>
</dbReference>
<dbReference type="PANTHER" id="PTHR10277:SF9">
    <property type="entry name" value="2-ISOPROPYLMALATE SYNTHASE 1, CHLOROPLASTIC-RELATED"/>
    <property type="match status" value="1"/>
</dbReference>
<dbReference type="PANTHER" id="PTHR10277">
    <property type="entry name" value="HOMOCITRATE SYNTHASE-RELATED"/>
    <property type="match status" value="1"/>
</dbReference>
<dbReference type="Pfam" id="PF22617">
    <property type="entry name" value="HCS_D2"/>
    <property type="match status" value="1"/>
</dbReference>
<dbReference type="Pfam" id="PF00682">
    <property type="entry name" value="HMGL-like"/>
    <property type="match status" value="1"/>
</dbReference>
<dbReference type="Pfam" id="PF08502">
    <property type="entry name" value="LeuA_dimer"/>
    <property type="match status" value="1"/>
</dbReference>
<dbReference type="SMART" id="SM00917">
    <property type="entry name" value="LeuA_dimer"/>
    <property type="match status" value="1"/>
</dbReference>
<dbReference type="SUPFAM" id="SSF110921">
    <property type="entry name" value="2-isopropylmalate synthase LeuA, allosteric (dimerisation) domain"/>
    <property type="match status" value="1"/>
</dbReference>
<dbReference type="SUPFAM" id="SSF51569">
    <property type="entry name" value="Aldolase"/>
    <property type="match status" value="1"/>
</dbReference>
<dbReference type="PROSITE" id="PS00815">
    <property type="entry name" value="AIPM_HOMOCIT_SYNTH_1"/>
    <property type="match status" value="1"/>
</dbReference>
<dbReference type="PROSITE" id="PS00816">
    <property type="entry name" value="AIPM_HOMOCIT_SYNTH_2"/>
    <property type="match status" value="1"/>
</dbReference>
<dbReference type="PROSITE" id="PS50991">
    <property type="entry name" value="PYR_CT"/>
    <property type="match status" value="1"/>
</dbReference>
<feature type="chain" id="PRO_1000149196" description="2-isopropylmalate synthase">
    <location>
        <begin position="1"/>
        <end position="523"/>
    </location>
</feature>
<feature type="domain" description="Pyruvate carboxyltransferase" evidence="1">
    <location>
        <begin position="5"/>
        <end position="267"/>
    </location>
</feature>
<feature type="region of interest" description="Regulatory domain" evidence="1">
    <location>
        <begin position="392"/>
        <end position="523"/>
    </location>
</feature>
<feature type="binding site" evidence="1">
    <location>
        <position position="14"/>
    </location>
    <ligand>
        <name>Mn(2+)</name>
        <dbReference type="ChEBI" id="CHEBI:29035"/>
    </ligand>
</feature>
<feature type="binding site" evidence="1">
    <location>
        <position position="202"/>
    </location>
    <ligand>
        <name>Mn(2+)</name>
        <dbReference type="ChEBI" id="CHEBI:29035"/>
    </ligand>
</feature>
<feature type="binding site" evidence="1">
    <location>
        <position position="204"/>
    </location>
    <ligand>
        <name>Mn(2+)</name>
        <dbReference type="ChEBI" id="CHEBI:29035"/>
    </ligand>
</feature>
<feature type="binding site" evidence="1">
    <location>
        <position position="238"/>
    </location>
    <ligand>
        <name>Mn(2+)</name>
        <dbReference type="ChEBI" id="CHEBI:29035"/>
    </ligand>
</feature>